<dbReference type="EMBL" id="AE013599">
    <property type="protein sequence ID" value="AAF57712.2"/>
    <property type="molecule type" value="Genomic_DNA"/>
</dbReference>
<dbReference type="EMBL" id="AY071762">
    <property type="protein sequence ID" value="AAL49384.1"/>
    <property type="molecule type" value="mRNA"/>
</dbReference>
<dbReference type="RefSeq" id="NP_611318.2">
    <property type="nucleotide sequence ID" value="NM_137474.5"/>
</dbReference>
<dbReference type="SMR" id="Q9V8F5"/>
<dbReference type="BioGRID" id="62779">
    <property type="interactions" value="8"/>
</dbReference>
<dbReference type="FunCoup" id="Q9V8F5">
    <property type="interactions" value="36"/>
</dbReference>
<dbReference type="IntAct" id="Q9V8F5">
    <property type="interactions" value="8"/>
</dbReference>
<dbReference type="STRING" id="7227.FBpp0085908"/>
<dbReference type="PaxDb" id="7227-FBpp0085908"/>
<dbReference type="DNASU" id="37099"/>
<dbReference type="EnsemblMetazoa" id="FBtr0086729">
    <property type="protein sequence ID" value="FBpp0085908"/>
    <property type="gene ID" value="FBgn0034328"/>
</dbReference>
<dbReference type="GeneID" id="37099"/>
<dbReference type="KEGG" id="dme:Dmel_CG15066"/>
<dbReference type="AGR" id="FB:FBgn0034328"/>
<dbReference type="CTD" id="37099"/>
<dbReference type="FlyBase" id="FBgn0034328">
    <property type="gene designation" value="BomBc1"/>
</dbReference>
<dbReference type="VEuPathDB" id="VectorBase:FBgn0034328"/>
<dbReference type="HOGENOM" id="CLU_2294530_0_0_1"/>
<dbReference type="InParanoid" id="Q9V8F5"/>
<dbReference type="OMA" id="CFIFATA"/>
<dbReference type="OrthoDB" id="7863118at2759"/>
<dbReference type="PhylomeDB" id="Q9V8F5"/>
<dbReference type="BioGRID-ORCS" id="37099">
    <property type="hits" value="0 hits in 1 CRISPR screen"/>
</dbReference>
<dbReference type="GenomeRNAi" id="37099"/>
<dbReference type="PRO" id="PR:Q9V8F5"/>
<dbReference type="Proteomes" id="UP000000803">
    <property type="component" value="Chromosome 2R"/>
</dbReference>
<dbReference type="Bgee" id="FBgn0034328">
    <property type="expression patterns" value="Expressed in sensory neuron in arthropod fat body and 61 other cell types or tissues"/>
</dbReference>
<dbReference type="ExpressionAtlas" id="Q9V8F5">
    <property type="expression patterns" value="baseline and differential"/>
</dbReference>
<dbReference type="GO" id="GO:0005576">
    <property type="term" value="C:extracellular region"/>
    <property type="evidence" value="ECO:0000314"/>
    <property type="project" value="UniProtKB"/>
</dbReference>
<dbReference type="GO" id="GO:0019731">
    <property type="term" value="P:antibacterial humoral response"/>
    <property type="evidence" value="ECO:0000314"/>
    <property type="project" value="UniProtKB"/>
</dbReference>
<dbReference type="GO" id="GO:0050830">
    <property type="term" value="P:defense response to Gram-positive bacterium"/>
    <property type="evidence" value="ECO:0000270"/>
    <property type="project" value="FlyBase"/>
</dbReference>
<dbReference type="GO" id="GO:0045087">
    <property type="term" value="P:innate immune response"/>
    <property type="evidence" value="ECO:0007669"/>
    <property type="project" value="UniProtKB-KW"/>
</dbReference>
<dbReference type="GO" id="GO:0009617">
    <property type="term" value="P:response to bacterium"/>
    <property type="evidence" value="ECO:0007007"/>
    <property type="project" value="FlyBase"/>
</dbReference>
<dbReference type="GO" id="GO:0010046">
    <property type="term" value="P:response to mycotoxin"/>
    <property type="evidence" value="ECO:0000270"/>
    <property type="project" value="FlyBase"/>
</dbReference>
<dbReference type="InterPro" id="IPR013172">
    <property type="entry name" value="Bomanin"/>
</dbReference>
<dbReference type="Pfam" id="PF08194">
    <property type="entry name" value="DIM"/>
    <property type="match status" value="1"/>
</dbReference>
<name>BM23_DROME</name>
<evidence type="ECO:0000255" key="1"/>
<evidence type="ECO:0000269" key="2">
    <source>
    </source>
</evidence>
<evidence type="ECO:0000269" key="3">
    <source>
    </source>
</evidence>
<evidence type="ECO:0000269" key="4">
    <source>
    </source>
</evidence>
<evidence type="ECO:0000269" key="5">
    <source>
    </source>
</evidence>
<evidence type="ECO:0000269" key="6">
    <source>
    </source>
</evidence>
<evidence type="ECO:0000269" key="7">
    <source ref="5"/>
</evidence>
<evidence type="ECO:0000303" key="8">
    <source>
    </source>
</evidence>
<evidence type="ECO:0000303" key="9">
    <source>
    </source>
</evidence>
<evidence type="ECO:0000303" key="10">
    <source ref="5"/>
</evidence>
<evidence type="ECO:0000305" key="11"/>
<evidence type="ECO:0000312" key="12">
    <source>
        <dbReference type="EMBL" id="AAF57712.2"/>
    </source>
</evidence>
<evidence type="ECO:0000312" key="13">
    <source>
        <dbReference type="FlyBase" id="FBgn0034328"/>
    </source>
</evidence>
<sequence>MKCLILSFAIFVVLASQATAGNVIIGGVCQDCSPPVAENVVVGGQSYRTGRPGQGTVYINSPGAYLGALDGPIRRTGAGGGGGGGAQYPDGYSGRLPGGTYLHNKDCVGCSISGGGD</sequence>
<protein>
    <recommendedName>
        <fullName evidence="13">Bomanin Bicipital 1</fullName>
    </recommendedName>
    <alternativeName>
        <fullName evidence="8">Bomanin-23</fullName>
    </alternativeName>
    <alternativeName>
        <fullName evidence="13">Immune-induced peptide 23</fullName>
        <shortName evidence="13">DIM-23</shortName>
        <shortName evidence="9">DIM23</shortName>
    </alternativeName>
</protein>
<comment type="function">
    <text evidence="4 5 6">Secreted immune-induced peptide induced by Toll signaling (PubMed:9736738). Has a role in resistance to bacterial and fungal infections (PubMed:25915418, PubMed:29920489).</text>
</comment>
<comment type="subcellular location">
    <subcellularLocation>
        <location evidence="5 6 7">Secreted</location>
    </subcellularLocation>
</comment>
<comment type="tissue specificity">
    <text evidence="5 6 7">Hemolymph (at protein level).</text>
</comment>
<comment type="induction">
    <text evidence="6">By bacterial infection (at protein level) (PubMed:9736738). Detected within 24 hours of infection (at protein level) (PubMed:9736738).</text>
</comment>
<comment type="mass spectrometry"/>
<comment type="miscellaneous">
    <text evidence="6">Not induced after bacterial challenge in strains carrying a loss-of-function mutation for Toll. Constitutively expressed in Toll gain-of-function mutants.</text>
</comment>
<comment type="similarity">
    <text evidence="11">Belongs to the bomanin family.</text>
</comment>
<gene>
    <name evidence="13" type="primary">BomBc1</name>
    <name evidence="13" type="synonym">Bom23</name>
    <name evidence="13" type="synonym">IM23</name>
    <name evidence="13" type="ORF">CG15066</name>
</gene>
<feature type="signal peptide" evidence="1">
    <location>
        <begin position="1"/>
        <end position="20"/>
    </location>
</feature>
<feature type="chain" id="PRO_0000021508" description="Bomanin Bicipital 1">
    <location>
        <begin position="21"/>
        <end position="117"/>
    </location>
</feature>
<feature type="disulfide bond" evidence="7">
    <location>
        <begin position="29"/>
        <end position="32"/>
    </location>
</feature>
<feature type="disulfide bond" evidence="7">
    <location>
        <begin position="107"/>
        <end position="110"/>
    </location>
</feature>
<feature type="sequence conflict" description="In Ref. 5; AA sequence." evidence="11" ref="5">
    <original>L</original>
    <variation>P</variation>
    <location>
        <position position="66"/>
    </location>
</feature>
<feature type="sequence conflict" description="In Ref. 5; AA sequence." evidence="11" ref="5">
    <original>AQ</original>
    <variation>TR</variation>
    <location>
        <begin position="86"/>
        <end position="87"/>
    </location>
</feature>
<accession>Q9V8F5</accession>
<accession>Q8SY64</accession>
<reference evidence="11" key="1">
    <citation type="journal article" date="2000" name="Science">
        <title>The genome sequence of Drosophila melanogaster.</title>
        <authorList>
            <person name="Adams M.D."/>
            <person name="Celniker S.E."/>
            <person name="Holt R.A."/>
            <person name="Evans C.A."/>
            <person name="Gocayne J.D."/>
            <person name="Amanatides P.G."/>
            <person name="Scherer S.E."/>
            <person name="Li P.W."/>
            <person name="Hoskins R.A."/>
            <person name="Galle R.F."/>
            <person name="George R.A."/>
            <person name="Lewis S.E."/>
            <person name="Richards S."/>
            <person name="Ashburner M."/>
            <person name="Henderson S.N."/>
            <person name="Sutton G.G."/>
            <person name="Wortman J.R."/>
            <person name="Yandell M.D."/>
            <person name="Zhang Q."/>
            <person name="Chen L.X."/>
            <person name="Brandon R.C."/>
            <person name="Rogers Y.-H.C."/>
            <person name="Blazej R.G."/>
            <person name="Champe M."/>
            <person name="Pfeiffer B.D."/>
            <person name="Wan K.H."/>
            <person name="Doyle C."/>
            <person name="Baxter E.G."/>
            <person name="Helt G."/>
            <person name="Nelson C.R."/>
            <person name="Miklos G.L.G."/>
            <person name="Abril J.F."/>
            <person name="Agbayani A."/>
            <person name="An H.-J."/>
            <person name="Andrews-Pfannkoch C."/>
            <person name="Baldwin D."/>
            <person name="Ballew R.M."/>
            <person name="Basu A."/>
            <person name="Baxendale J."/>
            <person name="Bayraktaroglu L."/>
            <person name="Beasley E.M."/>
            <person name="Beeson K.Y."/>
            <person name="Benos P.V."/>
            <person name="Berman B.P."/>
            <person name="Bhandari D."/>
            <person name="Bolshakov S."/>
            <person name="Borkova D."/>
            <person name="Botchan M.R."/>
            <person name="Bouck J."/>
            <person name="Brokstein P."/>
            <person name="Brottier P."/>
            <person name="Burtis K.C."/>
            <person name="Busam D.A."/>
            <person name="Butler H."/>
            <person name="Cadieu E."/>
            <person name="Center A."/>
            <person name="Chandra I."/>
            <person name="Cherry J.M."/>
            <person name="Cawley S."/>
            <person name="Dahlke C."/>
            <person name="Davenport L.B."/>
            <person name="Davies P."/>
            <person name="de Pablos B."/>
            <person name="Delcher A."/>
            <person name="Deng Z."/>
            <person name="Mays A.D."/>
            <person name="Dew I."/>
            <person name="Dietz S.M."/>
            <person name="Dodson K."/>
            <person name="Doup L.E."/>
            <person name="Downes M."/>
            <person name="Dugan-Rocha S."/>
            <person name="Dunkov B.C."/>
            <person name="Dunn P."/>
            <person name="Durbin K.J."/>
            <person name="Evangelista C.C."/>
            <person name="Ferraz C."/>
            <person name="Ferriera S."/>
            <person name="Fleischmann W."/>
            <person name="Fosler C."/>
            <person name="Gabrielian A.E."/>
            <person name="Garg N.S."/>
            <person name="Gelbart W.M."/>
            <person name="Glasser K."/>
            <person name="Glodek A."/>
            <person name="Gong F."/>
            <person name="Gorrell J.H."/>
            <person name="Gu Z."/>
            <person name="Guan P."/>
            <person name="Harris M."/>
            <person name="Harris N.L."/>
            <person name="Harvey D.A."/>
            <person name="Heiman T.J."/>
            <person name="Hernandez J.R."/>
            <person name="Houck J."/>
            <person name="Hostin D."/>
            <person name="Houston K.A."/>
            <person name="Howland T.J."/>
            <person name="Wei M.-H."/>
            <person name="Ibegwam C."/>
            <person name="Jalali M."/>
            <person name="Kalush F."/>
            <person name="Karpen G.H."/>
            <person name="Ke Z."/>
            <person name="Kennison J.A."/>
            <person name="Ketchum K.A."/>
            <person name="Kimmel B.E."/>
            <person name="Kodira C.D."/>
            <person name="Kraft C.L."/>
            <person name="Kravitz S."/>
            <person name="Kulp D."/>
            <person name="Lai Z."/>
            <person name="Lasko P."/>
            <person name="Lei Y."/>
            <person name="Levitsky A.A."/>
            <person name="Li J.H."/>
            <person name="Li Z."/>
            <person name="Liang Y."/>
            <person name="Lin X."/>
            <person name="Liu X."/>
            <person name="Mattei B."/>
            <person name="McIntosh T.C."/>
            <person name="McLeod M.P."/>
            <person name="McPherson D."/>
            <person name="Merkulov G."/>
            <person name="Milshina N.V."/>
            <person name="Mobarry C."/>
            <person name="Morris J."/>
            <person name="Moshrefi A."/>
            <person name="Mount S.M."/>
            <person name="Moy M."/>
            <person name="Murphy B."/>
            <person name="Murphy L."/>
            <person name="Muzny D.M."/>
            <person name="Nelson D.L."/>
            <person name="Nelson D.R."/>
            <person name="Nelson K.A."/>
            <person name="Nixon K."/>
            <person name="Nusskern D.R."/>
            <person name="Pacleb J.M."/>
            <person name="Palazzolo M."/>
            <person name="Pittman G.S."/>
            <person name="Pan S."/>
            <person name="Pollard J."/>
            <person name="Puri V."/>
            <person name="Reese M.G."/>
            <person name="Reinert K."/>
            <person name="Remington K."/>
            <person name="Saunders R.D.C."/>
            <person name="Scheeler F."/>
            <person name="Shen H."/>
            <person name="Shue B.C."/>
            <person name="Siden-Kiamos I."/>
            <person name="Simpson M."/>
            <person name="Skupski M.P."/>
            <person name="Smith T.J."/>
            <person name="Spier E."/>
            <person name="Spradling A.C."/>
            <person name="Stapleton M."/>
            <person name="Strong R."/>
            <person name="Sun E."/>
            <person name="Svirskas R."/>
            <person name="Tector C."/>
            <person name="Turner R."/>
            <person name="Venter E."/>
            <person name="Wang A.H."/>
            <person name="Wang X."/>
            <person name="Wang Z.-Y."/>
            <person name="Wassarman D.A."/>
            <person name="Weinstock G.M."/>
            <person name="Weissenbach J."/>
            <person name="Williams S.M."/>
            <person name="Woodage T."/>
            <person name="Worley K.C."/>
            <person name="Wu D."/>
            <person name="Yang S."/>
            <person name="Yao Q.A."/>
            <person name="Ye J."/>
            <person name="Yeh R.-F."/>
            <person name="Zaveri J.S."/>
            <person name="Zhan M."/>
            <person name="Zhang G."/>
            <person name="Zhao Q."/>
            <person name="Zheng L."/>
            <person name="Zheng X.H."/>
            <person name="Zhong F.N."/>
            <person name="Zhong W."/>
            <person name="Zhou X."/>
            <person name="Zhu S.C."/>
            <person name="Zhu X."/>
            <person name="Smith H.O."/>
            <person name="Gibbs R.A."/>
            <person name="Myers E.W."/>
            <person name="Rubin G.M."/>
            <person name="Venter J.C."/>
        </authorList>
    </citation>
    <scope>NUCLEOTIDE SEQUENCE [LARGE SCALE GENOMIC DNA]</scope>
    <source>
        <strain evidence="2">Berkeley</strain>
    </source>
</reference>
<reference evidence="11" key="2">
    <citation type="journal article" date="2002" name="Genome Biol.">
        <title>Annotation of the Drosophila melanogaster euchromatic genome: a systematic review.</title>
        <authorList>
            <person name="Misra S."/>
            <person name="Crosby M.A."/>
            <person name="Mungall C.J."/>
            <person name="Matthews B.B."/>
            <person name="Campbell K.S."/>
            <person name="Hradecky P."/>
            <person name="Huang Y."/>
            <person name="Kaminker J.S."/>
            <person name="Millburn G.H."/>
            <person name="Prochnik S.E."/>
            <person name="Smith C.D."/>
            <person name="Tupy J.L."/>
            <person name="Whitfield E.J."/>
            <person name="Bayraktaroglu L."/>
            <person name="Berman B.P."/>
            <person name="Bettencourt B.R."/>
            <person name="Celniker S.E."/>
            <person name="de Grey A.D.N.J."/>
            <person name="Drysdale R.A."/>
            <person name="Harris N.L."/>
            <person name="Richter J."/>
            <person name="Russo S."/>
            <person name="Schroeder A.J."/>
            <person name="Shu S.Q."/>
            <person name="Stapleton M."/>
            <person name="Yamada C."/>
            <person name="Ashburner M."/>
            <person name="Gelbart W.M."/>
            <person name="Rubin G.M."/>
            <person name="Lewis S.E."/>
        </authorList>
    </citation>
    <scope>GENOME REANNOTATION</scope>
    <source>
        <strain>Berkeley</strain>
    </source>
</reference>
<reference evidence="11" key="3">
    <citation type="journal article" date="2002" name="Genome Biol.">
        <title>A Drosophila full-length cDNA resource.</title>
        <authorList>
            <person name="Stapleton M."/>
            <person name="Carlson J.W."/>
            <person name="Brokstein P."/>
            <person name="Yu C."/>
            <person name="Champe M."/>
            <person name="George R.A."/>
            <person name="Guarin H."/>
            <person name="Kronmiller B."/>
            <person name="Pacleb J.M."/>
            <person name="Park S."/>
            <person name="Wan K.H."/>
            <person name="Rubin G.M."/>
            <person name="Celniker S.E."/>
        </authorList>
    </citation>
    <scope>NUCLEOTIDE SEQUENCE [LARGE SCALE MRNA]</scope>
    <source>
        <strain evidence="3">Berkeley</strain>
        <tissue evidence="3">Head</tissue>
    </source>
</reference>
<reference evidence="11" key="4">
    <citation type="journal article" date="1998" name="Proc. Natl. Acad. Sci. U.S.A.">
        <title>Differential display of peptides induced during the immune response of Drosophila: a matrix-assisted laser desorption ionization time-of-flight mass spectrometry study.</title>
        <authorList>
            <person name="Uttenweiler-Joseph S."/>
            <person name="Moniatte M."/>
            <person name="Lagueux M."/>
            <person name="van Dorsselaer A."/>
            <person name="Hoffmann J.A."/>
            <person name="Bulet P."/>
        </authorList>
    </citation>
    <scope>SUBCELLULAR LOCATION</scope>
    <scope>TISSUE SPECIFICITY</scope>
    <scope>INDUCTION BY BACTERIA</scope>
    <scope>MASS SPECTROMETRY</scope>
    <source>
        <strain evidence="9">Oregon-R</strain>
        <tissue evidence="9">Hemolymph</tissue>
    </source>
</reference>
<reference evidence="11" key="5">
    <citation type="submission" date="2002-07" db="UniProtKB">
        <authorList>
            <person name="Bulet P."/>
            <person name="Charlet M."/>
            <person name="Ehret-Sabatier L."/>
        </authorList>
    </citation>
    <scope>PROTEIN SEQUENCE OF 21-117</scope>
    <scope>DISULFIDE BONDS</scope>
    <scope>SUBCELLULAR LOCATION</scope>
    <scope>TISSUE SPECIFICITY</scope>
    <source>
        <strain evidence="10">Oregon-R</strain>
        <tissue evidence="10">Hemolymph</tissue>
    </source>
</reference>
<reference key="6">
    <citation type="journal article" date="2015" name="PLoS Pathog.">
        <title>An effector Peptide family required for Drosophila toll-mediated immunity.</title>
        <authorList>
            <person name="Clemmons A.W."/>
            <person name="Lindsay S.A."/>
            <person name="Wasserman S.A."/>
        </authorList>
    </citation>
    <scope>FUNCTION</scope>
</reference>
<reference key="7">
    <citation type="journal article" date="2018" name="J. Innate Immun.">
        <title>Short-Form Bomanins Mediate Humoral Immunity in Drosophila.</title>
        <authorList>
            <person name="Lindsay S.A."/>
            <person name="Lin S.J.H."/>
            <person name="Wasserman S.A."/>
        </authorList>
    </citation>
    <scope>FUNCTION</scope>
</reference>
<organism evidence="12">
    <name type="scientific">Drosophila melanogaster</name>
    <name type="common">Fruit fly</name>
    <dbReference type="NCBI Taxonomy" id="7227"/>
    <lineage>
        <taxon>Eukaryota</taxon>
        <taxon>Metazoa</taxon>
        <taxon>Ecdysozoa</taxon>
        <taxon>Arthropoda</taxon>
        <taxon>Hexapoda</taxon>
        <taxon>Insecta</taxon>
        <taxon>Pterygota</taxon>
        <taxon>Neoptera</taxon>
        <taxon>Endopterygota</taxon>
        <taxon>Diptera</taxon>
        <taxon>Brachycera</taxon>
        <taxon>Muscomorpha</taxon>
        <taxon>Ephydroidea</taxon>
        <taxon>Drosophilidae</taxon>
        <taxon>Drosophila</taxon>
        <taxon>Sophophora</taxon>
    </lineage>
</organism>
<keyword id="KW-0903">Direct protein sequencing</keyword>
<keyword id="KW-1015">Disulfide bond</keyword>
<keyword id="KW-0391">Immunity</keyword>
<keyword id="KW-0399">Innate immunity</keyword>
<keyword id="KW-1185">Reference proteome</keyword>
<keyword id="KW-0964">Secreted</keyword>
<keyword id="KW-0732">Signal</keyword>
<proteinExistence type="evidence at protein level"/>